<feature type="chain" id="PRO_0000141168" description="Ribose-phosphate pyrophosphokinase">
    <location>
        <begin position="1"/>
        <end position="316"/>
    </location>
</feature>
<feature type="active site" evidence="1">
    <location>
        <position position="195"/>
    </location>
</feature>
<feature type="binding site" evidence="1">
    <location>
        <begin position="39"/>
        <end position="41"/>
    </location>
    <ligand>
        <name>ATP</name>
        <dbReference type="ChEBI" id="CHEBI:30616"/>
    </ligand>
</feature>
<feature type="binding site" evidence="1">
    <location>
        <begin position="98"/>
        <end position="99"/>
    </location>
    <ligand>
        <name>ATP</name>
        <dbReference type="ChEBI" id="CHEBI:30616"/>
    </ligand>
</feature>
<feature type="binding site" evidence="1">
    <location>
        <position position="133"/>
    </location>
    <ligand>
        <name>Mg(2+)</name>
        <dbReference type="ChEBI" id="CHEBI:18420"/>
        <label>1</label>
    </ligand>
</feature>
<feature type="binding site" evidence="1">
    <location>
        <position position="172"/>
    </location>
    <ligand>
        <name>Mg(2+)</name>
        <dbReference type="ChEBI" id="CHEBI:18420"/>
        <label>2</label>
    </ligand>
</feature>
<feature type="binding site" evidence="1">
    <location>
        <position position="197"/>
    </location>
    <ligand>
        <name>D-ribose 5-phosphate</name>
        <dbReference type="ChEBI" id="CHEBI:78346"/>
    </ligand>
</feature>
<feature type="binding site" evidence="1">
    <location>
        <position position="221"/>
    </location>
    <ligand>
        <name>D-ribose 5-phosphate</name>
        <dbReference type="ChEBI" id="CHEBI:78346"/>
    </ligand>
</feature>
<feature type="binding site" evidence="1">
    <location>
        <begin position="225"/>
        <end position="229"/>
    </location>
    <ligand>
        <name>D-ribose 5-phosphate</name>
        <dbReference type="ChEBI" id="CHEBI:78346"/>
    </ligand>
</feature>
<comment type="function">
    <text evidence="1">Involved in the biosynthesis of the central metabolite phospho-alpha-D-ribosyl-1-pyrophosphate (PRPP) via the transfer of pyrophosphoryl group from ATP to 1-hydroxyl of ribose-5-phosphate (Rib-5-P).</text>
</comment>
<comment type="catalytic activity">
    <reaction evidence="1">
        <text>D-ribose 5-phosphate + ATP = 5-phospho-alpha-D-ribose 1-diphosphate + AMP + H(+)</text>
        <dbReference type="Rhea" id="RHEA:15609"/>
        <dbReference type="ChEBI" id="CHEBI:15378"/>
        <dbReference type="ChEBI" id="CHEBI:30616"/>
        <dbReference type="ChEBI" id="CHEBI:58017"/>
        <dbReference type="ChEBI" id="CHEBI:78346"/>
        <dbReference type="ChEBI" id="CHEBI:456215"/>
        <dbReference type="EC" id="2.7.6.1"/>
    </reaction>
</comment>
<comment type="cofactor">
    <cofactor evidence="1">
        <name>Mg(2+)</name>
        <dbReference type="ChEBI" id="CHEBI:18420"/>
    </cofactor>
    <text evidence="1">Binds 2 Mg(2+) ions per subunit.</text>
</comment>
<comment type="pathway">
    <text evidence="1">Metabolic intermediate biosynthesis; 5-phospho-alpha-D-ribose 1-diphosphate biosynthesis; 5-phospho-alpha-D-ribose 1-diphosphate from D-ribose 5-phosphate (route I): step 1/1.</text>
</comment>
<comment type="subunit">
    <text evidence="1">Homohexamer.</text>
</comment>
<comment type="subcellular location">
    <subcellularLocation>
        <location evidence="1">Cytoplasm</location>
    </subcellularLocation>
</comment>
<comment type="similarity">
    <text evidence="1">Belongs to the ribose-phosphate pyrophosphokinase family. Class I subfamily.</text>
</comment>
<keyword id="KW-0067">ATP-binding</keyword>
<keyword id="KW-0963">Cytoplasm</keyword>
<keyword id="KW-0418">Kinase</keyword>
<keyword id="KW-0460">Magnesium</keyword>
<keyword id="KW-0479">Metal-binding</keyword>
<keyword id="KW-0545">Nucleotide biosynthesis</keyword>
<keyword id="KW-0547">Nucleotide-binding</keyword>
<keyword id="KW-1185">Reference proteome</keyword>
<keyword id="KW-0808">Transferase</keyword>
<evidence type="ECO:0000255" key="1">
    <source>
        <dbReference type="HAMAP-Rule" id="MF_00583"/>
    </source>
</evidence>
<organism>
    <name type="scientific">Nitrosomonas europaea (strain ATCC 19718 / CIP 103999 / KCTC 2705 / NBRC 14298)</name>
    <dbReference type="NCBI Taxonomy" id="228410"/>
    <lineage>
        <taxon>Bacteria</taxon>
        <taxon>Pseudomonadati</taxon>
        <taxon>Pseudomonadota</taxon>
        <taxon>Betaproteobacteria</taxon>
        <taxon>Nitrosomonadales</taxon>
        <taxon>Nitrosomonadaceae</taxon>
        <taxon>Nitrosomonas</taxon>
    </lineage>
</organism>
<reference key="1">
    <citation type="journal article" date="2003" name="J. Bacteriol.">
        <title>Complete genome sequence of the ammonia-oxidizing bacterium and obligate chemolithoautotroph Nitrosomonas europaea.</title>
        <authorList>
            <person name="Chain P."/>
            <person name="Lamerdin J.E."/>
            <person name="Larimer F.W."/>
            <person name="Regala W."/>
            <person name="Lao V."/>
            <person name="Land M.L."/>
            <person name="Hauser L."/>
            <person name="Hooper A.B."/>
            <person name="Klotz M.G."/>
            <person name="Norton J."/>
            <person name="Sayavedra-Soto L.A."/>
            <person name="Arciero D.M."/>
            <person name="Hommes N.G."/>
            <person name="Whittaker M.M."/>
            <person name="Arp D.J."/>
        </authorList>
    </citation>
    <scope>NUCLEOTIDE SEQUENCE [LARGE SCALE GENOMIC DNA]</scope>
    <source>
        <strain>ATCC 19718 / CIP 103999 / KCTC 2705 / NBRC 14298</strain>
    </source>
</reference>
<gene>
    <name evidence="1" type="primary">prs</name>
    <name type="ordered locus">NE1826</name>
</gene>
<proteinExistence type="inferred from homology"/>
<name>KPRS_NITEU</name>
<protein>
    <recommendedName>
        <fullName evidence="1">Ribose-phosphate pyrophosphokinase</fullName>
        <shortName evidence="1">RPPK</shortName>
        <ecNumber evidence="1">2.7.6.1</ecNumber>
    </recommendedName>
    <alternativeName>
        <fullName evidence="1">5-phospho-D-ribosyl alpha-1-diphosphate synthase</fullName>
    </alternativeName>
    <alternativeName>
        <fullName evidence="1">Phosphoribosyl diphosphate synthase</fullName>
    </alternativeName>
    <alternativeName>
        <fullName evidence="1">Phosphoribosyl pyrophosphate synthase</fullName>
        <shortName evidence="1">P-Rib-PP synthase</shortName>
        <shortName evidence="1">PRPP synthase</shortName>
        <shortName evidence="1">PRPPase</shortName>
    </alternativeName>
</protein>
<dbReference type="EC" id="2.7.6.1" evidence="1"/>
<dbReference type="EMBL" id="AL954747">
    <property type="protein sequence ID" value="CAD85737.1"/>
    <property type="molecule type" value="Genomic_DNA"/>
</dbReference>
<dbReference type="RefSeq" id="WP_011112368.1">
    <property type="nucleotide sequence ID" value="NC_004757.1"/>
</dbReference>
<dbReference type="SMR" id="Q82TQ4"/>
<dbReference type="STRING" id="228410.NE1826"/>
<dbReference type="GeneID" id="87104984"/>
<dbReference type="KEGG" id="neu:NE1826"/>
<dbReference type="eggNOG" id="COG0462">
    <property type="taxonomic scope" value="Bacteria"/>
</dbReference>
<dbReference type="HOGENOM" id="CLU_033546_2_0_4"/>
<dbReference type="OrthoDB" id="9777067at2"/>
<dbReference type="PhylomeDB" id="Q82TQ4"/>
<dbReference type="UniPathway" id="UPA00087">
    <property type="reaction ID" value="UER00172"/>
</dbReference>
<dbReference type="Proteomes" id="UP000001416">
    <property type="component" value="Chromosome"/>
</dbReference>
<dbReference type="GO" id="GO:0005737">
    <property type="term" value="C:cytoplasm"/>
    <property type="evidence" value="ECO:0007669"/>
    <property type="project" value="UniProtKB-SubCell"/>
</dbReference>
<dbReference type="GO" id="GO:0002189">
    <property type="term" value="C:ribose phosphate diphosphokinase complex"/>
    <property type="evidence" value="ECO:0007669"/>
    <property type="project" value="TreeGrafter"/>
</dbReference>
<dbReference type="GO" id="GO:0005524">
    <property type="term" value="F:ATP binding"/>
    <property type="evidence" value="ECO:0007669"/>
    <property type="project" value="UniProtKB-KW"/>
</dbReference>
<dbReference type="GO" id="GO:0016301">
    <property type="term" value="F:kinase activity"/>
    <property type="evidence" value="ECO:0007669"/>
    <property type="project" value="UniProtKB-KW"/>
</dbReference>
<dbReference type="GO" id="GO:0000287">
    <property type="term" value="F:magnesium ion binding"/>
    <property type="evidence" value="ECO:0007669"/>
    <property type="project" value="UniProtKB-UniRule"/>
</dbReference>
<dbReference type="GO" id="GO:0004749">
    <property type="term" value="F:ribose phosphate diphosphokinase activity"/>
    <property type="evidence" value="ECO:0007669"/>
    <property type="project" value="UniProtKB-UniRule"/>
</dbReference>
<dbReference type="GO" id="GO:0006015">
    <property type="term" value="P:5-phosphoribose 1-diphosphate biosynthetic process"/>
    <property type="evidence" value="ECO:0007669"/>
    <property type="project" value="UniProtKB-UniRule"/>
</dbReference>
<dbReference type="GO" id="GO:0006164">
    <property type="term" value="P:purine nucleotide biosynthetic process"/>
    <property type="evidence" value="ECO:0007669"/>
    <property type="project" value="TreeGrafter"/>
</dbReference>
<dbReference type="GO" id="GO:0009156">
    <property type="term" value="P:ribonucleoside monophosphate biosynthetic process"/>
    <property type="evidence" value="ECO:0007669"/>
    <property type="project" value="InterPro"/>
</dbReference>
<dbReference type="CDD" id="cd06223">
    <property type="entry name" value="PRTases_typeI"/>
    <property type="match status" value="1"/>
</dbReference>
<dbReference type="FunFam" id="3.40.50.2020:FF:000007">
    <property type="entry name" value="Ribose-phosphate pyrophosphokinase"/>
    <property type="match status" value="1"/>
</dbReference>
<dbReference type="FunFam" id="3.40.50.2020:FF:000005">
    <property type="entry name" value="Ribose-phosphate pyrophosphokinase 1"/>
    <property type="match status" value="1"/>
</dbReference>
<dbReference type="Gene3D" id="3.40.50.2020">
    <property type="match status" value="2"/>
</dbReference>
<dbReference type="HAMAP" id="MF_00583_B">
    <property type="entry name" value="RibP_PPkinase_B"/>
    <property type="match status" value="1"/>
</dbReference>
<dbReference type="InterPro" id="IPR000842">
    <property type="entry name" value="PRib_PP_synth_CS"/>
</dbReference>
<dbReference type="InterPro" id="IPR029099">
    <property type="entry name" value="Pribosyltran_N"/>
</dbReference>
<dbReference type="InterPro" id="IPR000836">
    <property type="entry name" value="PRibTrfase_dom"/>
</dbReference>
<dbReference type="InterPro" id="IPR029057">
    <property type="entry name" value="PRTase-like"/>
</dbReference>
<dbReference type="InterPro" id="IPR005946">
    <property type="entry name" value="Rib-P_diPkinase"/>
</dbReference>
<dbReference type="InterPro" id="IPR037515">
    <property type="entry name" value="Rib-P_diPkinase_bac"/>
</dbReference>
<dbReference type="NCBIfam" id="NF002320">
    <property type="entry name" value="PRK01259.1"/>
    <property type="match status" value="1"/>
</dbReference>
<dbReference type="NCBIfam" id="TIGR01251">
    <property type="entry name" value="ribP_PPkin"/>
    <property type="match status" value="1"/>
</dbReference>
<dbReference type="PANTHER" id="PTHR10210">
    <property type="entry name" value="RIBOSE-PHOSPHATE DIPHOSPHOKINASE FAMILY MEMBER"/>
    <property type="match status" value="1"/>
</dbReference>
<dbReference type="PANTHER" id="PTHR10210:SF41">
    <property type="entry name" value="RIBOSE-PHOSPHATE PYROPHOSPHOKINASE 1, CHLOROPLASTIC"/>
    <property type="match status" value="1"/>
</dbReference>
<dbReference type="Pfam" id="PF14572">
    <property type="entry name" value="Pribosyl_synth"/>
    <property type="match status" value="1"/>
</dbReference>
<dbReference type="Pfam" id="PF13793">
    <property type="entry name" value="Pribosyltran_N"/>
    <property type="match status" value="1"/>
</dbReference>
<dbReference type="SMART" id="SM01400">
    <property type="entry name" value="Pribosyltran_N"/>
    <property type="match status" value="1"/>
</dbReference>
<dbReference type="SUPFAM" id="SSF53271">
    <property type="entry name" value="PRTase-like"/>
    <property type="match status" value="2"/>
</dbReference>
<dbReference type="PROSITE" id="PS00114">
    <property type="entry name" value="PRPP_SYNTHASE"/>
    <property type="match status" value="1"/>
</dbReference>
<sequence>MSYDSLMVFTGTANPKLAHDVVKYLNINLGRANVGRFSDGEVMVEILENVRGNDVFVLQSTCTPTNDSLMEILVIVDALKRASASRVTAAIPYFGYARQDRRTRSARVPITAKVVANMLTSVGVDRVLTMDLHSDQIQGFFDIPVDNVYGMPILLGDIWKHDYQNLIVVSPDVGGVVRARHLAKRLECDLAIIDKRRPKPNESKVMNIIGDVRGRTCVIIDDMVDTANTLCEAASALKREGAASVIAYSTHAVLSGKAVERVQTSDLDKLVVTDTIPLREDASKCNRIHQLSVASLLGESMLRISNESSLSSLFIE</sequence>
<accession>Q82TQ4</accession>